<evidence type="ECO:0000250" key="1">
    <source>
        <dbReference type="UniProtKB" id="P0ABI4"/>
    </source>
</evidence>
<evidence type="ECO:0000250" key="2">
    <source>
        <dbReference type="UniProtKB" id="Q9WZ31"/>
    </source>
</evidence>
<evidence type="ECO:0000255" key="3"/>
<evidence type="ECO:0000305" key="4"/>
<dbReference type="EMBL" id="AL590842">
    <property type="protein sequence ID" value="CAL22424.1"/>
    <property type="molecule type" value="Genomic_DNA"/>
</dbReference>
<dbReference type="EMBL" id="AE009952">
    <property type="protein sequence ID" value="AAM83982.1"/>
    <property type="status" value="ALT_INIT"/>
    <property type="molecule type" value="Genomic_DNA"/>
</dbReference>
<dbReference type="EMBL" id="AE017042">
    <property type="protein sequence ID" value="AAS63379.1"/>
    <property type="status" value="ALT_INIT"/>
    <property type="molecule type" value="Genomic_DNA"/>
</dbReference>
<dbReference type="PIR" id="AE0467">
    <property type="entry name" value="AE0467"/>
</dbReference>
<dbReference type="RefSeq" id="WP_002211480.1">
    <property type="nucleotide sequence ID" value="NZ_WUCM01000033.1"/>
</dbReference>
<dbReference type="RefSeq" id="YP_002348715.1">
    <property type="nucleotide sequence ID" value="NC_003143.1"/>
</dbReference>
<dbReference type="SMR" id="Q8ZAG5"/>
<dbReference type="IntAct" id="Q8ZAG5">
    <property type="interactions" value="1"/>
</dbReference>
<dbReference type="STRING" id="214092.YPO3837"/>
<dbReference type="PaxDb" id="214092-YPO3837"/>
<dbReference type="EnsemblBacteria" id="AAS63379">
    <property type="protein sequence ID" value="AAS63379"/>
    <property type="gene ID" value="YP_3211"/>
</dbReference>
<dbReference type="GeneID" id="57974871"/>
<dbReference type="KEGG" id="ype:YPO3837"/>
<dbReference type="KEGG" id="ypk:y0393"/>
<dbReference type="KEGG" id="ypm:YP_3211"/>
<dbReference type="PATRIC" id="fig|214092.21.peg.4359"/>
<dbReference type="eggNOG" id="COG0598">
    <property type="taxonomic scope" value="Bacteria"/>
</dbReference>
<dbReference type="HOGENOM" id="CLU_007127_5_0_6"/>
<dbReference type="OMA" id="RQNDDMR"/>
<dbReference type="OrthoDB" id="9803416at2"/>
<dbReference type="Proteomes" id="UP000000815">
    <property type="component" value="Chromosome"/>
</dbReference>
<dbReference type="Proteomes" id="UP000001019">
    <property type="component" value="Chromosome"/>
</dbReference>
<dbReference type="Proteomes" id="UP000002490">
    <property type="component" value="Chromosome"/>
</dbReference>
<dbReference type="GO" id="GO:0005886">
    <property type="term" value="C:plasma membrane"/>
    <property type="evidence" value="ECO:0007669"/>
    <property type="project" value="UniProtKB-SubCell"/>
</dbReference>
<dbReference type="GO" id="GO:0015087">
    <property type="term" value="F:cobalt ion transmembrane transporter activity"/>
    <property type="evidence" value="ECO:0000318"/>
    <property type="project" value="GO_Central"/>
</dbReference>
<dbReference type="GO" id="GO:0015095">
    <property type="term" value="F:magnesium ion transmembrane transporter activity"/>
    <property type="evidence" value="ECO:0000318"/>
    <property type="project" value="GO_Central"/>
</dbReference>
<dbReference type="GO" id="GO:0015099">
    <property type="term" value="F:nickel cation transmembrane transporter activity"/>
    <property type="evidence" value="ECO:0000318"/>
    <property type="project" value="GO_Central"/>
</dbReference>
<dbReference type="CDD" id="cd12835">
    <property type="entry name" value="EcCorA-like_1"/>
    <property type="match status" value="1"/>
</dbReference>
<dbReference type="FunFam" id="1.20.58.340:FF:000001">
    <property type="entry name" value="Magnesium transport protein CorA"/>
    <property type="match status" value="1"/>
</dbReference>
<dbReference type="Gene3D" id="1.20.58.340">
    <property type="entry name" value="Magnesium transport protein CorA, transmembrane region"/>
    <property type="match status" value="1"/>
</dbReference>
<dbReference type="InterPro" id="IPR045861">
    <property type="entry name" value="CorA_cytoplasmic_dom"/>
</dbReference>
<dbReference type="InterPro" id="IPR050829">
    <property type="entry name" value="CorA_MIT"/>
</dbReference>
<dbReference type="InterPro" id="IPR045863">
    <property type="entry name" value="CorA_TM1_TM2"/>
</dbReference>
<dbReference type="InterPro" id="IPR004488">
    <property type="entry name" value="Mg/Co-transport_prot_CorA"/>
</dbReference>
<dbReference type="InterPro" id="IPR002523">
    <property type="entry name" value="MgTranspt_CorA/ZnTranspt_ZntB"/>
</dbReference>
<dbReference type="NCBIfam" id="TIGR00383">
    <property type="entry name" value="corA"/>
    <property type="match status" value="1"/>
</dbReference>
<dbReference type="PANTHER" id="PTHR47685">
    <property type="entry name" value="MAGNESIUM TRANSPORT PROTEIN CORA"/>
    <property type="match status" value="1"/>
</dbReference>
<dbReference type="PANTHER" id="PTHR47685:SF1">
    <property type="entry name" value="MAGNESIUM TRANSPORT PROTEIN CORA"/>
    <property type="match status" value="1"/>
</dbReference>
<dbReference type="Pfam" id="PF01544">
    <property type="entry name" value="CorA"/>
    <property type="match status" value="1"/>
</dbReference>
<dbReference type="SUPFAM" id="SSF143865">
    <property type="entry name" value="CorA soluble domain-like"/>
    <property type="match status" value="1"/>
</dbReference>
<dbReference type="SUPFAM" id="SSF144083">
    <property type="entry name" value="Magnesium transport protein CorA, transmembrane region"/>
    <property type="match status" value="1"/>
</dbReference>
<sequence length="316" mass="36495">MLSAFKLHNNRLSRLELDESDDLASSLWVDLVEPEEGERERVQTELGQSLATRPELDDIEASARFFEDEDGLHIHSFFYYEDADDHAGNSTVAFTIRDGRLYTLRERELPAFRLYRMRARNQTLVDGNAYELLLDLFETKIEQLADEIENIYSDLEALSRVIMEGQQGDEYDAALSTLAEQEDIGWKVRLCLMDTQRALNFLVRKARLPSSQLEQAREVLRDIESLLPHNESLFQKVNFLMQAAMGFINIEQNRIIKIFSVVSVVFLPPTLVASSYGMNFEFMPELRWSFGYPGAIALMIIAGLAPYLYFKRKNWL</sequence>
<protein>
    <recommendedName>
        <fullName>Magnesium transport protein CorA</fullName>
    </recommendedName>
</protein>
<comment type="function">
    <text evidence="1 2">Mediates influx of magnesium ions (By similarity). Alternates between open and closed states. Activated by low cytoplasmic Mg(2+) levels. Inactive when cytoplasmic Mg(2+) levels are high (By similarity).</text>
</comment>
<comment type="catalytic activity">
    <reaction evidence="1">
        <text>Mg(2+)(in) = Mg(2+)(out)</text>
        <dbReference type="Rhea" id="RHEA:29827"/>
        <dbReference type="ChEBI" id="CHEBI:18420"/>
    </reaction>
</comment>
<comment type="subunit">
    <text evidence="2">Homopentamer. In the absence of Mg(2+), interactions between subunits are weakened, and dimers, trimers and tetramers can be observed in vitro (By similarity).</text>
</comment>
<comment type="subcellular location">
    <subcellularLocation>
        <location evidence="1">Cell inner membrane</location>
        <topology evidence="2">Multi-pass membrane protein</topology>
    </subcellularLocation>
</comment>
<comment type="domain">
    <text evidence="2">The central ion permeation pathway is formed by the first transmembrane domain from each of the five subunits. Mg(2+) binding strengthens interactions between subunits and leads to the formation of a symmetrical homopentamer surrounding a closed ion permeation pathway. Low Mg(2+) concentrations trigger both a conformation change within each subunit and a loosening of the interactions between subunits. This results in an open ion conduction pathway. In addition, this results in a less symmetrical shape of the whole complex.</text>
</comment>
<comment type="similarity">
    <text evidence="4">Belongs to the CorA metal ion transporter (MIT) (TC 1.A.35) family.</text>
</comment>
<comment type="sequence caution" evidence="4">
    <conflict type="erroneous initiation">
        <sequence resource="EMBL-CDS" id="AAM83982"/>
    </conflict>
</comment>
<comment type="sequence caution" evidence="4">
    <conflict type="erroneous initiation">
        <sequence resource="EMBL-CDS" id="AAS63379"/>
    </conflict>
</comment>
<keyword id="KW-0997">Cell inner membrane</keyword>
<keyword id="KW-1003">Cell membrane</keyword>
<keyword id="KW-0406">Ion transport</keyword>
<keyword id="KW-0460">Magnesium</keyword>
<keyword id="KW-0472">Membrane</keyword>
<keyword id="KW-1185">Reference proteome</keyword>
<keyword id="KW-0812">Transmembrane</keyword>
<keyword id="KW-1133">Transmembrane helix</keyword>
<keyword id="KW-0813">Transport</keyword>
<gene>
    <name type="primary">corA</name>
    <name type="ordered locus">YPO3837</name>
    <name type="ordered locus">y0393</name>
    <name type="ordered locus">YP_3211</name>
</gene>
<reference key="1">
    <citation type="journal article" date="2001" name="Nature">
        <title>Genome sequence of Yersinia pestis, the causative agent of plague.</title>
        <authorList>
            <person name="Parkhill J."/>
            <person name="Wren B.W."/>
            <person name="Thomson N.R."/>
            <person name="Titball R.W."/>
            <person name="Holden M.T.G."/>
            <person name="Prentice M.B."/>
            <person name="Sebaihia M."/>
            <person name="James K.D."/>
            <person name="Churcher C.M."/>
            <person name="Mungall K.L."/>
            <person name="Baker S."/>
            <person name="Basham D."/>
            <person name="Bentley S.D."/>
            <person name="Brooks K."/>
            <person name="Cerdeno-Tarraga A.-M."/>
            <person name="Chillingworth T."/>
            <person name="Cronin A."/>
            <person name="Davies R.M."/>
            <person name="Davis P."/>
            <person name="Dougan G."/>
            <person name="Feltwell T."/>
            <person name="Hamlin N."/>
            <person name="Holroyd S."/>
            <person name="Jagels K."/>
            <person name="Karlyshev A.V."/>
            <person name="Leather S."/>
            <person name="Moule S."/>
            <person name="Oyston P.C.F."/>
            <person name="Quail M.A."/>
            <person name="Rutherford K.M."/>
            <person name="Simmonds M."/>
            <person name="Skelton J."/>
            <person name="Stevens K."/>
            <person name="Whitehead S."/>
            <person name="Barrell B.G."/>
        </authorList>
    </citation>
    <scope>NUCLEOTIDE SEQUENCE [LARGE SCALE GENOMIC DNA]</scope>
    <source>
        <strain>CO-92 / Biovar Orientalis</strain>
    </source>
</reference>
<reference key="2">
    <citation type="journal article" date="2002" name="J. Bacteriol.">
        <title>Genome sequence of Yersinia pestis KIM.</title>
        <authorList>
            <person name="Deng W."/>
            <person name="Burland V."/>
            <person name="Plunkett G. III"/>
            <person name="Boutin A."/>
            <person name="Mayhew G.F."/>
            <person name="Liss P."/>
            <person name="Perna N.T."/>
            <person name="Rose D.J."/>
            <person name="Mau B."/>
            <person name="Zhou S."/>
            <person name="Schwartz D.C."/>
            <person name="Fetherston J.D."/>
            <person name="Lindler L.E."/>
            <person name="Brubaker R.R."/>
            <person name="Plano G.V."/>
            <person name="Straley S.C."/>
            <person name="McDonough K.A."/>
            <person name="Nilles M.L."/>
            <person name="Matson J.S."/>
            <person name="Blattner F.R."/>
            <person name="Perry R.D."/>
        </authorList>
    </citation>
    <scope>NUCLEOTIDE SEQUENCE [LARGE SCALE GENOMIC DNA]</scope>
    <source>
        <strain>KIM10+ / Biovar Mediaevalis</strain>
    </source>
</reference>
<reference key="3">
    <citation type="journal article" date="2004" name="DNA Res.">
        <title>Complete genome sequence of Yersinia pestis strain 91001, an isolate avirulent to humans.</title>
        <authorList>
            <person name="Song Y."/>
            <person name="Tong Z."/>
            <person name="Wang J."/>
            <person name="Wang L."/>
            <person name="Guo Z."/>
            <person name="Han Y."/>
            <person name="Zhang J."/>
            <person name="Pei D."/>
            <person name="Zhou D."/>
            <person name="Qin H."/>
            <person name="Pang X."/>
            <person name="Han Y."/>
            <person name="Zhai J."/>
            <person name="Li M."/>
            <person name="Cui B."/>
            <person name="Qi Z."/>
            <person name="Jin L."/>
            <person name="Dai R."/>
            <person name="Chen F."/>
            <person name="Li S."/>
            <person name="Ye C."/>
            <person name="Du Z."/>
            <person name="Lin W."/>
            <person name="Wang J."/>
            <person name="Yu J."/>
            <person name="Yang H."/>
            <person name="Wang J."/>
            <person name="Huang P."/>
            <person name="Yang R."/>
        </authorList>
    </citation>
    <scope>NUCLEOTIDE SEQUENCE [LARGE SCALE GENOMIC DNA]</scope>
    <source>
        <strain>91001 / Biovar Mediaevalis</strain>
    </source>
</reference>
<organism>
    <name type="scientific">Yersinia pestis</name>
    <dbReference type="NCBI Taxonomy" id="632"/>
    <lineage>
        <taxon>Bacteria</taxon>
        <taxon>Pseudomonadati</taxon>
        <taxon>Pseudomonadota</taxon>
        <taxon>Gammaproteobacteria</taxon>
        <taxon>Enterobacterales</taxon>
        <taxon>Yersiniaceae</taxon>
        <taxon>Yersinia</taxon>
    </lineage>
</organism>
<feature type="chain" id="PRO_0000239109" description="Magnesium transport protein CorA">
    <location>
        <begin position="1"/>
        <end position="316"/>
    </location>
</feature>
<feature type="transmembrane region" description="Helical" evidence="3">
    <location>
        <begin position="258"/>
        <end position="278"/>
    </location>
</feature>
<feature type="transmembrane region" description="Helical" evidence="3">
    <location>
        <begin position="290"/>
        <end position="310"/>
    </location>
</feature>
<feature type="short sequence motif" description="Probable selectivity filter" evidence="2">
    <location>
        <begin position="277"/>
        <end position="279"/>
    </location>
</feature>
<feature type="site" description="Essential for ion permeation" evidence="2">
    <location>
        <position position="253"/>
    </location>
</feature>
<proteinExistence type="inferred from homology"/>
<accession>Q8ZAG5</accession>
<accession>Q0WAH3</accession>
<accession>Q74R71</accession>
<accession>Q8D1J8</accession>
<name>CORA_YERPE</name>